<sequence>MQKQAELYRGKAKTVYSTENPDLLVLEFRNDTSAGDGARIEQFDRKGMVNNKFNYFIMSKLAEAGIPTQMERLLSDTECLVKKLDMVPVECVVRNRAAGSLVKRLGIEEGIELNPPLFDLFLKNDAMHDPMVNESYCETFGWVSKENLARMKELTYKANDVLKKLFDDAGLILVDFKLEFGLYKGEVVLGDEFSPDGSRLWDKETLEKMDKDRFRQSLGGLIEAYEAVARRLGVQLD</sequence>
<gene>
    <name type="primary">purC</name>
    <name type="ordered locus">c3004</name>
</gene>
<feature type="chain" id="PRO_0000100827" description="Phosphoribosylaminoimidazole-succinocarboxamide synthase">
    <location>
        <begin position="1"/>
        <end position="237"/>
    </location>
</feature>
<evidence type="ECO:0000250" key="1"/>
<evidence type="ECO:0000305" key="2"/>
<dbReference type="EC" id="6.3.2.6"/>
<dbReference type="EMBL" id="AE014075">
    <property type="protein sequence ID" value="AAN81454.1"/>
    <property type="status" value="ALT_INIT"/>
    <property type="molecule type" value="Genomic_DNA"/>
</dbReference>
<dbReference type="RefSeq" id="WP_001295467.1">
    <property type="nucleotide sequence ID" value="NZ_CP051263.1"/>
</dbReference>
<dbReference type="SMR" id="P0A7D8"/>
<dbReference type="STRING" id="199310.c3004"/>
<dbReference type="GeneID" id="89517285"/>
<dbReference type="KEGG" id="ecc:c3004"/>
<dbReference type="eggNOG" id="COG0152">
    <property type="taxonomic scope" value="Bacteria"/>
</dbReference>
<dbReference type="HOGENOM" id="CLU_061495_2_0_6"/>
<dbReference type="UniPathway" id="UPA00074">
    <property type="reaction ID" value="UER00131"/>
</dbReference>
<dbReference type="Proteomes" id="UP000001410">
    <property type="component" value="Chromosome"/>
</dbReference>
<dbReference type="GO" id="GO:0005829">
    <property type="term" value="C:cytosol"/>
    <property type="evidence" value="ECO:0007669"/>
    <property type="project" value="TreeGrafter"/>
</dbReference>
<dbReference type="GO" id="GO:0005524">
    <property type="term" value="F:ATP binding"/>
    <property type="evidence" value="ECO:0007669"/>
    <property type="project" value="UniProtKB-KW"/>
</dbReference>
<dbReference type="GO" id="GO:0004639">
    <property type="term" value="F:phosphoribosylaminoimidazolesuccinocarboxamide synthase activity"/>
    <property type="evidence" value="ECO:0007669"/>
    <property type="project" value="UniProtKB-UniRule"/>
</dbReference>
<dbReference type="GO" id="GO:0006189">
    <property type="term" value="P:'de novo' IMP biosynthetic process"/>
    <property type="evidence" value="ECO:0007669"/>
    <property type="project" value="UniProtKB-UniRule"/>
</dbReference>
<dbReference type="GO" id="GO:0009236">
    <property type="term" value="P:cobalamin biosynthetic process"/>
    <property type="evidence" value="ECO:0007669"/>
    <property type="project" value="InterPro"/>
</dbReference>
<dbReference type="CDD" id="cd01415">
    <property type="entry name" value="SAICAR_synt_PurC"/>
    <property type="match status" value="1"/>
</dbReference>
<dbReference type="FunFam" id="3.30.200.20:FF:000086">
    <property type="entry name" value="Phosphoribosylaminoimidazole-succinocarboxamide synthase"/>
    <property type="match status" value="1"/>
</dbReference>
<dbReference type="FunFam" id="3.30.470.20:FF:000006">
    <property type="entry name" value="Phosphoribosylaminoimidazole-succinocarboxamide synthase"/>
    <property type="match status" value="1"/>
</dbReference>
<dbReference type="Gene3D" id="3.30.470.20">
    <property type="entry name" value="ATP-grasp fold, B domain"/>
    <property type="match status" value="1"/>
</dbReference>
<dbReference type="Gene3D" id="3.30.200.20">
    <property type="entry name" value="Phosphorylase Kinase, domain 1"/>
    <property type="match status" value="1"/>
</dbReference>
<dbReference type="HAMAP" id="MF_00137">
    <property type="entry name" value="SAICAR_synth"/>
    <property type="match status" value="1"/>
</dbReference>
<dbReference type="InterPro" id="IPR028923">
    <property type="entry name" value="SAICAR_synt/ADE2_N"/>
</dbReference>
<dbReference type="InterPro" id="IPR033934">
    <property type="entry name" value="SAICAR_synt_PurC"/>
</dbReference>
<dbReference type="InterPro" id="IPR001636">
    <property type="entry name" value="SAICAR_synth"/>
</dbReference>
<dbReference type="InterPro" id="IPR050089">
    <property type="entry name" value="SAICAR_synthetase"/>
</dbReference>
<dbReference type="InterPro" id="IPR018236">
    <property type="entry name" value="SAICAR_synthetase_CS"/>
</dbReference>
<dbReference type="NCBIfam" id="TIGR00081">
    <property type="entry name" value="purC"/>
    <property type="match status" value="1"/>
</dbReference>
<dbReference type="PANTHER" id="PTHR43599">
    <property type="entry name" value="MULTIFUNCTIONAL PROTEIN ADE2"/>
    <property type="match status" value="1"/>
</dbReference>
<dbReference type="PANTHER" id="PTHR43599:SF3">
    <property type="entry name" value="SI:DKEY-6E2.2"/>
    <property type="match status" value="1"/>
</dbReference>
<dbReference type="Pfam" id="PF01259">
    <property type="entry name" value="SAICAR_synt"/>
    <property type="match status" value="1"/>
</dbReference>
<dbReference type="SUPFAM" id="SSF56104">
    <property type="entry name" value="SAICAR synthase-like"/>
    <property type="match status" value="1"/>
</dbReference>
<dbReference type="PROSITE" id="PS01057">
    <property type="entry name" value="SAICAR_SYNTHETASE_1"/>
    <property type="match status" value="1"/>
</dbReference>
<dbReference type="PROSITE" id="PS01058">
    <property type="entry name" value="SAICAR_SYNTHETASE_2"/>
    <property type="match status" value="1"/>
</dbReference>
<organism>
    <name type="scientific">Escherichia coli O6:H1 (strain CFT073 / ATCC 700928 / UPEC)</name>
    <dbReference type="NCBI Taxonomy" id="199310"/>
    <lineage>
        <taxon>Bacteria</taxon>
        <taxon>Pseudomonadati</taxon>
        <taxon>Pseudomonadota</taxon>
        <taxon>Gammaproteobacteria</taxon>
        <taxon>Enterobacterales</taxon>
        <taxon>Enterobacteriaceae</taxon>
        <taxon>Escherichia</taxon>
    </lineage>
</organism>
<reference key="1">
    <citation type="journal article" date="2002" name="Proc. Natl. Acad. Sci. U.S.A.">
        <title>Extensive mosaic structure revealed by the complete genome sequence of uropathogenic Escherichia coli.</title>
        <authorList>
            <person name="Welch R.A."/>
            <person name="Burland V."/>
            <person name="Plunkett G. III"/>
            <person name="Redford P."/>
            <person name="Roesch P."/>
            <person name="Rasko D."/>
            <person name="Buckles E.L."/>
            <person name="Liou S.-R."/>
            <person name="Boutin A."/>
            <person name="Hackett J."/>
            <person name="Stroud D."/>
            <person name="Mayhew G.F."/>
            <person name="Rose D.J."/>
            <person name="Zhou S."/>
            <person name="Schwartz D.C."/>
            <person name="Perna N.T."/>
            <person name="Mobley H.L.T."/>
            <person name="Donnenberg M.S."/>
            <person name="Blattner F.R."/>
        </authorList>
    </citation>
    <scope>NUCLEOTIDE SEQUENCE [LARGE SCALE GENOMIC DNA]</scope>
    <source>
        <strain>CFT073 / ATCC 700928 / UPEC</strain>
    </source>
</reference>
<proteinExistence type="inferred from homology"/>
<keyword id="KW-0067">ATP-binding</keyword>
<keyword id="KW-0436">Ligase</keyword>
<keyword id="KW-0547">Nucleotide-binding</keyword>
<keyword id="KW-0658">Purine biosynthesis</keyword>
<keyword id="KW-1185">Reference proteome</keyword>
<comment type="catalytic activity">
    <reaction>
        <text>5-amino-1-(5-phospho-D-ribosyl)imidazole-4-carboxylate + L-aspartate + ATP = (2S)-2-[5-amino-1-(5-phospho-beta-D-ribosyl)imidazole-4-carboxamido]succinate + ADP + phosphate + 2 H(+)</text>
        <dbReference type="Rhea" id="RHEA:22628"/>
        <dbReference type="ChEBI" id="CHEBI:15378"/>
        <dbReference type="ChEBI" id="CHEBI:29991"/>
        <dbReference type="ChEBI" id="CHEBI:30616"/>
        <dbReference type="ChEBI" id="CHEBI:43474"/>
        <dbReference type="ChEBI" id="CHEBI:58443"/>
        <dbReference type="ChEBI" id="CHEBI:77657"/>
        <dbReference type="ChEBI" id="CHEBI:456216"/>
        <dbReference type="EC" id="6.3.2.6"/>
    </reaction>
</comment>
<comment type="pathway">
    <text>Purine metabolism; IMP biosynthesis via de novo pathway; 5-amino-1-(5-phospho-D-ribosyl)imidazole-4-carboxamide from 5-amino-1-(5-phospho-D-ribosyl)imidazole-4-carboxylate: step 1/2.</text>
</comment>
<comment type="subunit">
    <text evidence="1">Homotrimer.</text>
</comment>
<comment type="similarity">
    <text evidence="2">Belongs to the SAICAR synthetase family.</text>
</comment>
<comment type="sequence caution" evidence="2">
    <conflict type="erroneous initiation">
        <sequence resource="EMBL-CDS" id="AAN81454"/>
    </conflict>
</comment>
<name>PUR7_ECOL6</name>
<protein>
    <recommendedName>
        <fullName>Phosphoribosylaminoimidazole-succinocarboxamide synthase</fullName>
        <ecNumber>6.3.2.6</ecNumber>
    </recommendedName>
    <alternativeName>
        <fullName>SAICAR synthetase</fullName>
    </alternativeName>
</protein>
<accession>P0A7D8</accession>
<accession>P21155</accession>